<dbReference type="EC" id="2.3.1.234" evidence="1"/>
<dbReference type="EMBL" id="CP000152">
    <property type="protein sequence ID" value="ABB12320.1"/>
    <property type="molecule type" value="Genomic_DNA"/>
</dbReference>
<dbReference type="RefSeq" id="WP_011355802.1">
    <property type="nucleotide sequence ID" value="NZ_WNDV01000006.1"/>
</dbReference>
<dbReference type="SMR" id="Q393P6"/>
<dbReference type="GeneID" id="45098534"/>
<dbReference type="KEGG" id="bur:Bcep18194_B2209"/>
<dbReference type="HOGENOM" id="CLU_023208_0_2_4"/>
<dbReference type="Proteomes" id="UP000002705">
    <property type="component" value="Chromosome 2"/>
</dbReference>
<dbReference type="GO" id="GO:0005737">
    <property type="term" value="C:cytoplasm"/>
    <property type="evidence" value="ECO:0007669"/>
    <property type="project" value="UniProtKB-SubCell"/>
</dbReference>
<dbReference type="GO" id="GO:0005506">
    <property type="term" value="F:iron ion binding"/>
    <property type="evidence" value="ECO:0007669"/>
    <property type="project" value="UniProtKB-UniRule"/>
</dbReference>
<dbReference type="GO" id="GO:0061711">
    <property type="term" value="F:N(6)-L-threonylcarbamoyladenine synthase activity"/>
    <property type="evidence" value="ECO:0007669"/>
    <property type="project" value="UniProtKB-EC"/>
</dbReference>
<dbReference type="GO" id="GO:0002949">
    <property type="term" value="P:tRNA threonylcarbamoyladenosine modification"/>
    <property type="evidence" value="ECO:0007669"/>
    <property type="project" value="UniProtKB-UniRule"/>
</dbReference>
<dbReference type="CDD" id="cd24133">
    <property type="entry name" value="ASKHA_NBD_TsaD_bac"/>
    <property type="match status" value="1"/>
</dbReference>
<dbReference type="FunFam" id="3.30.420.40:FF:000012">
    <property type="entry name" value="tRNA N6-adenosine threonylcarbamoyltransferase"/>
    <property type="match status" value="1"/>
</dbReference>
<dbReference type="FunFam" id="3.30.420.40:FF:000040">
    <property type="entry name" value="tRNA N6-adenosine threonylcarbamoyltransferase"/>
    <property type="match status" value="1"/>
</dbReference>
<dbReference type="Gene3D" id="3.30.420.40">
    <property type="match status" value="2"/>
</dbReference>
<dbReference type="HAMAP" id="MF_01445">
    <property type="entry name" value="TsaD"/>
    <property type="match status" value="1"/>
</dbReference>
<dbReference type="InterPro" id="IPR043129">
    <property type="entry name" value="ATPase_NBD"/>
</dbReference>
<dbReference type="InterPro" id="IPR000905">
    <property type="entry name" value="Gcp-like_dom"/>
</dbReference>
<dbReference type="InterPro" id="IPR017861">
    <property type="entry name" value="KAE1/TsaD"/>
</dbReference>
<dbReference type="InterPro" id="IPR022450">
    <property type="entry name" value="TsaD"/>
</dbReference>
<dbReference type="NCBIfam" id="TIGR00329">
    <property type="entry name" value="gcp_kae1"/>
    <property type="match status" value="1"/>
</dbReference>
<dbReference type="NCBIfam" id="TIGR03723">
    <property type="entry name" value="T6A_TsaD_YgjD"/>
    <property type="match status" value="1"/>
</dbReference>
<dbReference type="PANTHER" id="PTHR11735">
    <property type="entry name" value="TRNA N6-ADENOSINE THREONYLCARBAMOYLTRANSFERASE"/>
    <property type="match status" value="1"/>
</dbReference>
<dbReference type="PANTHER" id="PTHR11735:SF6">
    <property type="entry name" value="TRNA N6-ADENOSINE THREONYLCARBAMOYLTRANSFERASE, MITOCHONDRIAL"/>
    <property type="match status" value="1"/>
</dbReference>
<dbReference type="Pfam" id="PF00814">
    <property type="entry name" value="TsaD"/>
    <property type="match status" value="1"/>
</dbReference>
<dbReference type="PRINTS" id="PR00789">
    <property type="entry name" value="OSIALOPTASE"/>
</dbReference>
<dbReference type="SUPFAM" id="SSF53067">
    <property type="entry name" value="Actin-like ATPase domain"/>
    <property type="match status" value="2"/>
</dbReference>
<name>TSAD_BURL3</name>
<feature type="chain" id="PRO_0000303306" description="tRNA N6-adenosine threonylcarbamoyltransferase">
    <location>
        <begin position="1"/>
        <end position="346"/>
    </location>
</feature>
<feature type="binding site" evidence="1">
    <location>
        <position position="111"/>
    </location>
    <ligand>
        <name>Fe cation</name>
        <dbReference type="ChEBI" id="CHEBI:24875"/>
    </ligand>
</feature>
<feature type="binding site" evidence="1">
    <location>
        <position position="115"/>
    </location>
    <ligand>
        <name>Fe cation</name>
        <dbReference type="ChEBI" id="CHEBI:24875"/>
    </ligand>
</feature>
<feature type="binding site" evidence="1">
    <location>
        <begin position="134"/>
        <end position="138"/>
    </location>
    <ligand>
        <name>substrate</name>
    </ligand>
</feature>
<feature type="binding site" evidence="1">
    <location>
        <position position="167"/>
    </location>
    <ligand>
        <name>substrate</name>
    </ligand>
</feature>
<feature type="binding site" evidence="1">
    <location>
        <position position="180"/>
    </location>
    <ligand>
        <name>substrate</name>
    </ligand>
</feature>
<feature type="binding site" evidence="1">
    <location>
        <position position="279"/>
    </location>
    <ligand>
        <name>substrate</name>
    </ligand>
</feature>
<feature type="binding site" evidence="1">
    <location>
        <position position="307"/>
    </location>
    <ligand>
        <name>Fe cation</name>
        <dbReference type="ChEBI" id="CHEBI:24875"/>
    </ligand>
</feature>
<sequence length="346" mass="36528">MLVLGIESSCDETGLALYDTQRGLLAHALHSQIAMHREYGGVVPELASRDHIRRALPLLEEVMAQSGTRRDDIDAIAFTQGPGLAGALLVGASIANALALAWNKPTVGIHHLEGHLLSPLLVDQPPPFPFVALLVSGGHTQLMRVTDVGVYETLGETLDDAAGEAFDKTAKLIGLGYPGGPEVSKLAETGTPGAVVLPRPMLHSGDLDFSFSGLKTAVLTQMKKFEAAKLEGEALERAKADLARGFVDAAVDVLVAKSLAALKKTKLKRLVVAGGVGANRQLRAALSAAAAKRGFDVHYPDLALCTDNGAMIALAGALRLGRWPEQANADYAFTVKPRWDLASLAR</sequence>
<proteinExistence type="inferred from homology"/>
<accession>Q393P6</accession>
<reference key="1">
    <citation type="submission" date="2005-10" db="EMBL/GenBank/DDBJ databases">
        <title>Complete sequence of chromosome 2 of Burkholderia sp. 383.</title>
        <authorList>
            <consortium name="US DOE Joint Genome Institute"/>
            <person name="Copeland A."/>
            <person name="Lucas S."/>
            <person name="Lapidus A."/>
            <person name="Barry K."/>
            <person name="Detter J.C."/>
            <person name="Glavina T."/>
            <person name="Hammon N."/>
            <person name="Israni S."/>
            <person name="Pitluck S."/>
            <person name="Chain P."/>
            <person name="Malfatti S."/>
            <person name="Shin M."/>
            <person name="Vergez L."/>
            <person name="Schmutz J."/>
            <person name="Larimer F."/>
            <person name="Land M."/>
            <person name="Kyrpides N."/>
            <person name="Lykidis A."/>
            <person name="Richardson P."/>
        </authorList>
    </citation>
    <scope>NUCLEOTIDE SEQUENCE [LARGE SCALE GENOMIC DNA]</scope>
    <source>
        <strain>ATCC 17760 / DSM 23089 / LMG 22485 / NCIMB 9086 / R18194 / 383</strain>
    </source>
</reference>
<keyword id="KW-0012">Acyltransferase</keyword>
<keyword id="KW-0963">Cytoplasm</keyword>
<keyword id="KW-0408">Iron</keyword>
<keyword id="KW-0479">Metal-binding</keyword>
<keyword id="KW-0808">Transferase</keyword>
<keyword id="KW-0819">tRNA processing</keyword>
<protein>
    <recommendedName>
        <fullName evidence="1">tRNA N6-adenosine threonylcarbamoyltransferase</fullName>
        <ecNumber evidence="1">2.3.1.234</ecNumber>
    </recommendedName>
    <alternativeName>
        <fullName evidence="1">N6-L-threonylcarbamoyladenine synthase</fullName>
        <shortName evidence="1">t(6)A synthase</shortName>
    </alternativeName>
    <alternativeName>
        <fullName evidence="1">t(6)A37 threonylcarbamoyladenosine biosynthesis protein TsaD</fullName>
    </alternativeName>
    <alternativeName>
        <fullName evidence="1">tRNA threonylcarbamoyladenosine biosynthesis protein TsaD</fullName>
    </alternativeName>
</protein>
<comment type="function">
    <text evidence="1">Required for the formation of a threonylcarbamoyl group on adenosine at position 37 (t(6)A37) in tRNAs that read codons beginning with adenine. Is involved in the transfer of the threonylcarbamoyl moiety of threonylcarbamoyl-AMP (TC-AMP) to the N6 group of A37, together with TsaE and TsaB. TsaD likely plays a direct catalytic role in this reaction.</text>
</comment>
<comment type="catalytic activity">
    <reaction evidence="1">
        <text>L-threonylcarbamoyladenylate + adenosine(37) in tRNA = N(6)-L-threonylcarbamoyladenosine(37) in tRNA + AMP + H(+)</text>
        <dbReference type="Rhea" id="RHEA:37059"/>
        <dbReference type="Rhea" id="RHEA-COMP:10162"/>
        <dbReference type="Rhea" id="RHEA-COMP:10163"/>
        <dbReference type="ChEBI" id="CHEBI:15378"/>
        <dbReference type="ChEBI" id="CHEBI:73682"/>
        <dbReference type="ChEBI" id="CHEBI:74411"/>
        <dbReference type="ChEBI" id="CHEBI:74418"/>
        <dbReference type="ChEBI" id="CHEBI:456215"/>
        <dbReference type="EC" id="2.3.1.234"/>
    </reaction>
</comment>
<comment type="cofactor">
    <cofactor evidence="1">
        <name>Fe(2+)</name>
        <dbReference type="ChEBI" id="CHEBI:29033"/>
    </cofactor>
    <text evidence="1">Binds 1 Fe(2+) ion per subunit.</text>
</comment>
<comment type="subcellular location">
    <subcellularLocation>
        <location evidence="1">Cytoplasm</location>
    </subcellularLocation>
</comment>
<comment type="similarity">
    <text evidence="1">Belongs to the KAE1 / TsaD family.</text>
</comment>
<gene>
    <name evidence="1" type="primary">tsaD</name>
    <name type="synonym">gcp</name>
    <name type="ordered locus">Bcep18194_B2209</name>
</gene>
<evidence type="ECO:0000255" key="1">
    <source>
        <dbReference type="HAMAP-Rule" id="MF_01445"/>
    </source>
</evidence>
<organism>
    <name type="scientific">Burkholderia lata (strain ATCC 17760 / DSM 23089 / LMG 22485 / NCIMB 9086 / R18194 / 383)</name>
    <dbReference type="NCBI Taxonomy" id="482957"/>
    <lineage>
        <taxon>Bacteria</taxon>
        <taxon>Pseudomonadati</taxon>
        <taxon>Pseudomonadota</taxon>
        <taxon>Betaproteobacteria</taxon>
        <taxon>Burkholderiales</taxon>
        <taxon>Burkholderiaceae</taxon>
        <taxon>Burkholderia</taxon>
        <taxon>Burkholderia cepacia complex</taxon>
    </lineage>
</organism>